<comment type="subcellular location">
    <subcellularLocation>
        <location evidence="1">Cell membrane</location>
        <topology evidence="1">Multi-pass membrane protein</topology>
    </subcellularLocation>
</comment>
<comment type="similarity">
    <text evidence="1">Belongs to the UPF0182 family.</text>
</comment>
<keyword id="KW-1003">Cell membrane</keyword>
<keyword id="KW-0472">Membrane</keyword>
<keyword id="KW-1185">Reference proteome</keyword>
<keyword id="KW-0812">Transmembrane</keyword>
<keyword id="KW-1133">Transmembrane helix</keyword>
<dbReference type="EMBL" id="AP009152">
    <property type="protein sequence ID" value="BAG29217.1"/>
    <property type="molecule type" value="Genomic_DNA"/>
</dbReference>
<dbReference type="RefSeq" id="WP_012397938.1">
    <property type="nucleotide sequence ID" value="NC_010617.1"/>
</dbReference>
<dbReference type="SMR" id="B2GL41"/>
<dbReference type="KEGG" id="krh:KRH_08700"/>
<dbReference type="eggNOG" id="COG1615">
    <property type="taxonomic scope" value="Bacteria"/>
</dbReference>
<dbReference type="HOGENOM" id="CLU_007733_1_0_11"/>
<dbReference type="OrthoDB" id="9763654at2"/>
<dbReference type="Proteomes" id="UP000008838">
    <property type="component" value="Chromosome"/>
</dbReference>
<dbReference type="GO" id="GO:0005576">
    <property type="term" value="C:extracellular region"/>
    <property type="evidence" value="ECO:0007669"/>
    <property type="project" value="TreeGrafter"/>
</dbReference>
<dbReference type="GO" id="GO:0005886">
    <property type="term" value="C:plasma membrane"/>
    <property type="evidence" value="ECO:0007669"/>
    <property type="project" value="UniProtKB-SubCell"/>
</dbReference>
<dbReference type="HAMAP" id="MF_01600">
    <property type="entry name" value="UPF0182"/>
    <property type="match status" value="1"/>
</dbReference>
<dbReference type="InterPro" id="IPR005372">
    <property type="entry name" value="UPF0182"/>
</dbReference>
<dbReference type="PANTHER" id="PTHR39344">
    <property type="entry name" value="UPF0182 PROTEIN SLL1060"/>
    <property type="match status" value="1"/>
</dbReference>
<dbReference type="PANTHER" id="PTHR39344:SF1">
    <property type="entry name" value="UPF0182 PROTEIN SLL1060"/>
    <property type="match status" value="1"/>
</dbReference>
<dbReference type="Pfam" id="PF03699">
    <property type="entry name" value="UPF0182"/>
    <property type="match status" value="1"/>
</dbReference>
<sequence length="983" mass="107554">MTAGSTSPRPSARSASGRPKRGALLPTVIAVVVLIALFVGFTQVYTNILWFEQLGYLRVFITRNLAVIGLFVAAALIVAALMFLSLWLAHRHRPRGGEVTDTMRKYQQALDPVRKVVMVAVPLIFGLFAASTVATQWQTVMLFFNQEPFGQTDPQFSMDLGFYVFTLPFLRLLIGFLVTALLLAGVAGLLMHYVYGGIRIHERGITTTRAARVHLGSIVAAFLALQAVNFWLDRYSTLISSSGKWTGAMYTDVNAVIPTKGILAVAALLVAVLFVVAGFIGRWKLPLIGAAMLVVVAVVAGGLYPWAIQRFQVTPTEQALEKEFIQRNITMTRQAYGLDDTQVTPYDATTETEKGALRQDTETTSNIRLLDPNVVSSAFAQLQQFRPYYQFPEMLNVDRYDIDGQSQDTVIATRELNPDQIQGWYNQSVVYTHGYGVVAAYGSRVQSDGKPQFMQAGIPSKGEISDDYEPRIYFGEKSPNYSIVGGAAEDAPLELDRPQTNEGDAEDAKTTFTGNGGPNVGNWFNKLAYSIKFQSTDMLLSDAVRPESQILYDRNPRERVEKVAPYLTVDGKPYPAIVDNKVVWIVDAYTTAASYPYSSPSVLQDATKDTQTAQGTTAALPNERVNYIRNSVKATVNAYDGSVELYAWDDQDPVLKSWQNVFPSTVKPYSEMSADLMAHVRYPEDMFKVQRELLNRYHVTDANSFYANDDVWSVPNDPTQQNRNVSQPPYYLSMRMPGEKEANFSLTSSFIPQQNESGNTRNVMYGYLSANADAGTGKDGVKSENYGKLRLLELPRSSVVPGPGQAQNLFNSDTDVSQELNLLRQGASEVINGNLLTLPAGGGMLYVQPVYVQSSGDAAYPTLRRVLVGFGEKVGFAPTLDGALDEVFGGNSGAKTDTGAGVSEKAAEAAQGGKGKDSTPSPSPSGTPVPRSSSLQEALDTANKAMQDSDKAMKDGDWTKYGEAQDRLKRAIDDAMAQDGATK</sequence>
<organism>
    <name type="scientific">Kocuria rhizophila (strain ATCC 9341 / DSM 348 / NBRC 103217 / DC2201)</name>
    <dbReference type="NCBI Taxonomy" id="378753"/>
    <lineage>
        <taxon>Bacteria</taxon>
        <taxon>Bacillati</taxon>
        <taxon>Actinomycetota</taxon>
        <taxon>Actinomycetes</taxon>
        <taxon>Micrococcales</taxon>
        <taxon>Micrococcaceae</taxon>
        <taxon>Kocuria</taxon>
    </lineage>
</organism>
<proteinExistence type="inferred from homology"/>
<evidence type="ECO:0000255" key="1">
    <source>
        <dbReference type="HAMAP-Rule" id="MF_01600"/>
    </source>
</evidence>
<evidence type="ECO:0000256" key="2">
    <source>
        <dbReference type="SAM" id="MobiDB-lite"/>
    </source>
</evidence>
<feature type="chain" id="PRO_1000148060" description="UPF0182 protein KRH_08700">
    <location>
        <begin position="1"/>
        <end position="983"/>
    </location>
</feature>
<feature type="transmembrane region" description="Helical" evidence="1">
    <location>
        <begin position="22"/>
        <end position="42"/>
    </location>
</feature>
<feature type="transmembrane region" description="Helical" evidence="1">
    <location>
        <begin position="67"/>
        <end position="87"/>
    </location>
</feature>
<feature type="transmembrane region" description="Helical" evidence="1">
    <location>
        <begin position="116"/>
        <end position="136"/>
    </location>
</feature>
<feature type="transmembrane region" description="Helical" evidence="1">
    <location>
        <begin position="172"/>
        <end position="192"/>
    </location>
</feature>
<feature type="transmembrane region" description="Helical" evidence="1">
    <location>
        <begin position="213"/>
        <end position="233"/>
    </location>
</feature>
<feature type="transmembrane region" description="Helical" evidence="1">
    <location>
        <begin position="261"/>
        <end position="281"/>
    </location>
</feature>
<feature type="transmembrane region" description="Helical" evidence="1">
    <location>
        <begin position="288"/>
        <end position="308"/>
    </location>
</feature>
<feature type="region of interest" description="Disordered" evidence="2">
    <location>
        <begin position="893"/>
        <end position="959"/>
    </location>
</feature>
<feature type="compositionally biased region" description="Basic and acidic residues" evidence="2">
    <location>
        <begin position="947"/>
        <end position="959"/>
    </location>
</feature>
<name>Y870_KOCRD</name>
<reference key="1">
    <citation type="journal article" date="2008" name="J. Bacteriol.">
        <title>Complete genome sequence of the soil actinomycete Kocuria rhizophila.</title>
        <authorList>
            <person name="Takarada H."/>
            <person name="Sekine M."/>
            <person name="Kosugi H."/>
            <person name="Matsuo Y."/>
            <person name="Fujisawa T."/>
            <person name="Omata S."/>
            <person name="Kishi E."/>
            <person name="Shimizu A."/>
            <person name="Tsukatani N."/>
            <person name="Tanikawa S."/>
            <person name="Fujita N."/>
            <person name="Harayama S."/>
        </authorList>
    </citation>
    <scope>NUCLEOTIDE SEQUENCE [LARGE SCALE GENOMIC DNA]</scope>
    <source>
        <strain>ATCC 9341 / DSM 348 / NBRC 103217 / DC2201</strain>
    </source>
</reference>
<protein>
    <recommendedName>
        <fullName evidence="1">UPF0182 protein KRH_08700</fullName>
    </recommendedName>
</protein>
<gene>
    <name type="ordered locus">KRH_08700</name>
</gene>
<accession>B2GL41</accession>